<gene>
    <name evidence="5 6" type="primary">TIP1-2</name>
</gene>
<comment type="function">
    <text evidence="1">Water channel required to facilitate the transport of water from the vacuolar compartment to the cytoplasm.</text>
</comment>
<comment type="subcellular location">
    <subcellularLocation>
        <location evidence="1">Vacuole membrane</location>
        <topology evidence="2">Multi-pass membrane protein</topology>
    </subcellularLocation>
</comment>
<comment type="tissue specificity">
    <text evidence="3 4">Mainly expressed in fruits and leaves, and, to a lower extent, in roots, stems and flowers.</text>
</comment>
<comment type="induction">
    <text evidence="3 4">Induced by salt (NaCl) (PubMed:26307965, PubMed:29778840). Triggered by drought (PubMed:29778840).</text>
</comment>
<comment type="domain">
    <text evidence="7">Aquaporins contain two tandem repeats each containing three membrane-spanning domains and a pore-forming loop with the signature motif Asn-Pro-Ala (NPA).</text>
</comment>
<comment type="biotechnology">
    <text evidence="8">May be used to improve drought and salt stresses resistance.</text>
</comment>
<comment type="similarity">
    <text evidence="7">Belongs to the MIP/aquaporin (TC 1.A.8) family. TIP (TC 1.A.8.10) subfamily.</text>
</comment>
<accession>P0DO54</accession>
<reference key="1">
    <citation type="journal article" date="2015" name="Int. J. Mol. Sci.">
        <title>Genome-wide identification and expression analyses of aquaporin gene family during development and abiotic stress in banana.</title>
        <authorList>
            <person name="Hu W."/>
            <person name="Hou X."/>
            <person name="Huang C."/>
            <person name="Yan Y."/>
            <person name="Tie W."/>
            <person name="Ding Z."/>
            <person name="Wei Y."/>
            <person name="Liu J."/>
            <person name="Miao H."/>
            <person name="Lu Z."/>
            <person name="Li M."/>
            <person name="Xu B."/>
            <person name="Jin Z."/>
        </authorList>
    </citation>
    <scope>NUCLEOTIDE SEQUENCE [MRNA]</scope>
    <scope>TISSUE SPECIFICITY</scope>
    <scope>INDUCTION BY SALT</scope>
    <scope>GENE FAMILY</scope>
    <scope>NOMENCLATURE</scope>
    <source>
        <strain>cv. Cavendish (AAA)</strain>
    </source>
</reference>
<reference key="2">
    <citation type="journal article" date="2018" name="Plant Physiol. Biochem.">
        <title>Identification of a novel promoter from banana aquaporin family gene (MaTIP1;2) which responses to drought and salt-stress in transgenic Arabidopsis thaliana.</title>
        <authorList>
            <person name="Song S."/>
            <person name="Xu Y."/>
            <person name="Huang D."/>
            <person name="Miao H."/>
            <person name="Liu J."/>
            <person name="Jia C."/>
            <person name="Hu W."/>
            <person name="Valarezo A.V."/>
            <person name="Xu B."/>
            <person name="Jin Z."/>
        </authorList>
    </citation>
    <scope>TISSUE SPECIFICITY</scope>
    <scope>INDUCTION BY DROUGHT AND SALT</scope>
    <scope>BIOTECHNOLOGY</scope>
</reference>
<sequence>MPIGSIAIGAPGEASHPDTIKASLAEFISTLIFVFAGEGSGMAFNKLTNDGSTTPAGLVAASLAHGFALFVAVSVGANISGGHVNPAVTFGAFLGGNISLIRGILYWIAQLLGSVVACLLLKLATGGLETSAFSLSSDVSVWNAVVFEIVMTFGLVYTVYATAVDPRKGDLGVIAPIAIGFIVGANILAGGAFDGASMNPAVSFGPAVVSWTWDNHWVYWVGPLIGAAIAALVYDGVFIGQATHEQLPPSDY</sequence>
<proteinExistence type="evidence at transcript level"/>
<evidence type="ECO:0000250" key="1">
    <source>
        <dbReference type="UniProtKB" id="P26587"/>
    </source>
</evidence>
<evidence type="ECO:0000255" key="2"/>
<evidence type="ECO:0000269" key="3">
    <source>
    </source>
</evidence>
<evidence type="ECO:0000269" key="4">
    <source>
    </source>
</evidence>
<evidence type="ECO:0000303" key="5">
    <source>
    </source>
</evidence>
<evidence type="ECO:0000303" key="6">
    <source>
    </source>
</evidence>
<evidence type="ECO:0000305" key="7"/>
<evidence type="ECO:0000305" key="8">
    <source>
    </source>
</evidence>
<dbReference type="SMR" id="P0DO54"/>
<dbReference type="OMA" id="WRICQIF"/>
<dbReference type="GO" id="GO:0005774">
    <property type="term" value="C:vacuolar membrane"/>
    <property type="evidence" value="ECO:0007669"/>
    <property type="project" value="UniProtKB-SubCell"/>
</dbReference>
<dbReference type="GO" id="GO:0015250">
    <property type="term" value="F:water channel activity"/>
    <property type="evidence" value="ECO:0007669"/>
    <property type="project" value="TreeGrafter"/>
</dbReference>
<dbReference type="GO" id="GO:1902074">
    <property type="term" value="P:response to salt"/>
    <property type="evidence" value="ECO:0000270"/>
    <property type="project" value="UniProtKB"/>
</dbReference>
<dbReference type="GO" id="GO:0009651">
    <property type="term" value="P:response to salt stress"/>
    <property type="evidence" value="ECO:0000270"/>
    <property type="project" value="UniProtKB"/>
</dbReference>
<dbReference type="GO" id="GO:0009414">
    <property type="term" value="P:response to water deprivation"/>
    <property type="evidence" value="ECO:0000270"/>
    <property type="project" value="UniProtKB"/>
</dbReference>
<dbReference type="CDD" id="cd00333">
    <property type="entry name" value="MIP"/>
    <property type="match status" value="1"/>
</dbReference>
<dbReference type="FunFam" id="1.20.1080.10:FF:000002">
    <property type="entry name" value="Probable aquaporin TIP1-1"/>
    <property type="match status" value="1"/>
</dbReference>
<dbReference type="Gene3D" id="1.20.1080.10">
    <property type="entry name" value="Glycerol uptake facilitator protein"/>
    <property type="match status" value="1"/>
</dbReference>
<dbReference type="InterPro" id="IPR023271">
    <property type="entry name" value="Aquaporin-like"/>
</dbReference>
<dbReference type="InterPro" id="IPR034294">
    <property type="entry name" value="Aquaporin_transptr"/>
</dbReference>
<dbReference type="InterPro" id="IPR000425">
    <property type="entry name" value="MIP"/>
</dbReference>
<dbReference type="InterPro" id="IPR022357">
    <property type="entry name" value="MIP_CS"/>
</dbReference>
<dbReference type="NCBIfam" id="TIGR00861">
    <property type="entry name" value="MIP"/>
    <property type="match status" value="1"/>
</dbReference>
<dbReference type="PANTHER" id="PTHR45665:SF21">
    <property type="entry name" value="AQUAPORIN TIP1-3"/>
    <property type="match status" value="1"/>
</dbReference>
<dbReference type="PANTHER" id="PTHR45665">
    <property type="entry name" value="AQUAPORIN-8"/>
    <property type="match status" value="1"/>
</dbReference>
<dbReference type="Pfam" id="PF00230">
    <property type="entry name" value="MIP"/>
    <property type="match status" value="1"/>
</dbReference>
<dbReference type="PRINTS" id="PR00783">
    <property type="entry name" value="MINTRINSICP"/>
</dbReference>
<dbReference type="SUPFAM" id="SSF81338">
    <property type="entry name" value="Aquaporin-like"/>
    <property type="match status" value="1"/>
</dbReference>
<dbReference type="PROSITE" id="PS00221">
    <property type="entry name" value="MIP"/>
    <property type="match status" value="1"/>
</dbReference>
<feature type="chain" id="PRO_0000455810" description="Aquaporin TIP1-2">
    <location>
        <begin position="1"/>
        <end position="252"/>
    </location>
</feature>
<feature type="topological domain" description="Cytoplasmic" evidence="7">
    <location>
        <begin position="1"/>
        <end position="23"/>
    </location>
</feature>
<feature type="transmembrane region" description="Helical; Name=1" evidence="2">
    <location>
        <begin position="24"/>
        <end position="44"/>
    </location>
</feature>
<feature type="topological domain" description="Vacuolar" evidence="7">
    <location>
        <begin position="45"/>
        <end position="55"/>
    </location>
</feature>
<feature type="transmembrane region" description="Helical; Name=2" evidence="2">
    <location>
        <begin position="56"/>
        <end position="76"/>
    </location>
</feature>
<feature type="topological domain" description="Cytoplasmic" evidence="7">
    <location>
        <begin position="77"/>
        <end position="103"/>
    </location>
</feature>
<feature type="transmembrane region" description="Helical; Name=3" evidence="2">
    <location>
        <begin position="104"/>
        <end position="124"/>
    </location>
</feature>
<feature type="topological domain" description="Vacuolar" evidence="7">
    <location>
        <begin position="125"/>
        <end position="143"/>
    </location>
</feature>
<feature type="transmembrane region" description="Helical; Name=4" evidence="2">
    <location>
        <begin position="144"/>
        <end position="164"/>
    </location>
</feature>
<feature type="topological domain" description="Cytoplasmic" evidence="7">
    <location>
        <begin position="165"/>
        <end position="172"/>
    </location>
</feature>
<feature type="transmembrane region" description="Helical; Name=5" evidence="2">
    <location>
        <begin position="173"/>
        <end position="193"/>
    </location>
</feature>
<feature type="topological domain" description="Vacuolar" evidence="7">
    <location>
        <begin position="194"/>
        <end position="219"/>
    </location>
</feature>
<feature type="transmembrane region" description="Helical; Name=6" evidence="2">
    <location>
        <begin position="220"/>
        <end position="240"/>
    </location>
</feature>
<feature type="topological domain" description="Cytoplasmic" evidence="7">
    <location>
        <begin position="241"/>
        <end position="252"/>
    </location>
</feature>
<feature type="short sequence motif" description="NPA 1" evidence="2">
    <location>
        <begin position="85"/>
        <end position="87"/>
    </location>
</feature>
<feature type="short sequence motif" description="NPA 2" evidence="2">
    <location>
        <begin position="199"/>
        <end position="201"/>
    </location>
</feature>
<protein>
    <recommendedName>
        <fullName evidence="5 6">Aquaporin TIP1-2</fullName>
    </recommendedName>
    <alternativeName>
        <fullName evidence="5 6">Tonoplast intrinsic protein 1-2</fullName>
        <shortName evidence="5">MaTIP1-2</shortName>
        <shortName evidence="5 6">MaTIP1;2</shortName>
    </alternativeName>
</protein>
<keyword id="KW-0472">Membrane</keyword>
<keyword id="KW-0346">Stress response</keyword>
<keyword id="KW-0812">Transmembrane</keyword>
<keyword id="KW-1133">Transmembrane helix</keyword>
<keyword id="KW-0813">Transport</keyword>
<keyword id="KW-0926">Vacuole</keyword>
<name>TIP12_MUSAC</name>
<organism>
    <name type="scientific">Musa acuminata</name>
    <name type="common">Banana</name>
    <name type="synonym">Musa cavendishii</name>
    <dbReference type="NCBI Taxonomy" id="4641"/>
    <lineage>
        <taxon>Eukaryota</taxon>
        <taxon>Viridiplantae</taxon>
        <taxon>Streptophyta</taxon>
        <taxon>Embryophyta</taxon>
        <taxon>Tracheophyta</taxon>
        <taxon>Spermatophyta</taxon>
        <taxon>Magnoliopsida</taxon>
        <taxon>Liliopsida</taxon>
        <taxon>Zingiberales</taxon>
        <taxon>Musaceae</taxon>
        <taxon>Musa</taxon>
    </lineage>
</organism>